<protein>
    <recommendedName>
        <fullName evidence="2">tRNA (guanine-N(7)-)-methyltransferase</fullName>
        <ecNumber evidence="2">2.1.1.33</ecNumber>
    </recommendedName>
    <alternativeName>
        <fullName evidence="2">tRNA (guanine(46)-N(7))-methyltransferase</fullName>
    </alternativeName>
    <alternativeName>
        <fullName evidence="2">tRNA(m7G46)-methyltransferase</fullName>
    </alternativeName>
</protein>
<organism>
    <name type="scientific">Prochlorococcus marinus (strain AS9601)</name>
    <dbReference type="NCBI Taxonomy" id="146891"/>
    <lineage>
        <taxon>Bacteria</taxon>
        <taxon>Bacillati</taxon>
        <taxon>Cyanobacteriota</taxon>
        <taxon>Cyanophyceae</taxon>
        <taxon>Synechococcales</taxon>
        <taxon>Prochlorococcaceae</taxon>
        <taxon>Prochlorococcus</taxon>
    </lineage>
</organism>
<reference key="1">
    <citation type="journal article" date="2007" name="PLoS Genet.">
        <title>Patterns and implications of gene gain and loss in the evolution of Prochlorococcus.</title>
        <authorList>
            <person name="Kettler G.C."/>
            <person name="Martiny A.C."/>
            <person name="Huang K."/>
            <person name="Zucker J."/>
            <person name="Coleman M.L."/>
            <person name="Rodrigue S."/>
            <person name="Chen F."/>
            <person name="Lapidus A."/>
            <person name="Ferriera S."/>
            <person name="Johnson J."/>
            <person name="Steglich C."/>
            <person name="Church G.M."/>
            <person name="Richardson P."/>
            <person name="Chisholm S.W."/>
        </authorList>
    </citation>
    <scope>NUCLEOTIDE SEQUENCE [LARGE SCALE GENOMIC DNA]</scope>
    <source>
        <strain>AS9601</strain>
    </source>
</reference>
<gene>
    <name evidence="2" type="primary">trmB</name>
    <name type="ordered locus">A9601_02621</name>
</gene>
<accession>A2BP39</accession>
<sequence length="209" mass="24784">MRQHVNPLSINFNQIERIPSLGEMFGDSKLNLHLDIGCAAGEFLFDLALVNTSWNYLGIEIREKLVKNAKLKVLESEIKNLYFLFGNANNILNDVQSELIIKNLKSISFYFPDPWFKKRHYKRRVIQPEFINILSNLLQKGTLIFIKTDVKDLFDYMDYTISNNFYFKTIDKKDFNYSESFNPNKVKTNREKYVINNQLDIFERIYIKI</sequence>
<proteinExistence type="inferred from homology"/>
<dbReference type="EC" id="2.1.1.33" evidence="2"/>
<dbReference type="EMBL" id="CP000551">
    <property type="protein sequence ID" value="ABM69550.1"/>
    <property type="molecule type" value="Genomic_DNA"/>
</dbReference>
<dbReference type="RefSeq" id="WP_011817734.1">
    <property type="nucleotide sequence ID" value="NC_008816.1"/>
</dbReference>
<dbReference type="SMR" id="A2BP39"/>
<dbReference type="STRING" id="146891.A9601_02621"/>
<dbReference type="KEGG" id="pmb:A9601_02621"/>
<dbReference type="eggNOG" id="COG0220">
    <property type="taxonomic scope" value="Bacteria"/>
</dbReference>
<dbReference type="HOGENOM" id="CLU_050910_1_3_3"/>
<dbReference type="OrthoDB" id="9802090at2"/>
<dbReference type="UniPathway" id="UPA00989"/>
<dbReference type="Proteomes" id="UP000002590">
    <property type="component" value="Chromosome"/>
</dbReference>
<dbReference type="GO" id="GO:0043527">
    <property type="term" value="C:tRNA methyltransferase complex"/>
    <property type="evidence" value="ECO:0007669"/>
    <property type="project" value="TreeGrafter"/>
</dbReference>
<dbReference type="GO" id="GO:0008176">
    <property type="term" value="F:tRNA (guanine(46)-N7)-methyltransferase activity"/>
    <property type="evidence" value="ECO:0007669"/>
    <property type="project" value="UniProtKB-UniRule"/>
</dbReference>
<dbReference type="CDD" id="cd02440">
    <property type="entry name" value="AdoMet_MTases"/>
    <property type="match status" value="1"/>
</dbReference>
<dbReference type="Gene3D" id="3.40.50.150">
    <property type="entry name" value="Vaccinia Virus protein VP39"/>
    <property type="match status" value="1"/>
</dbReference>
<dbReference type="HAMAP" id="MF_01057">
    <property type="entry name" value="tRNA_methyltr_TrmB"/>
    <property type="match status" value="1"/>
</dbReference>
<dbReference type="InterPro" id="IPR029063">
    <property type="entry name" value="SAM-dependent_MTases_sf"/>
</dbReference>
<dbReference type="InterPro" id="IPR003358">
    <property type="entry name" value="tRNA_(Gua-N-7)_MeTrfase_Trmb"/>
</dbReference>
<dbReference type="InterPro" id="IPR055361">
    <property type="entry name" value="tRNA_methyltr_TrmB_bact"/>
</dbReference>
<dbReference type="NCBIfam" id="TIGR00091">
    <property type="entry name" value="tRNA (guanosine(46)-N7)-methyltransferase TrmB"/>
    <property type="match status" value="1"/>
</dbReference>
<dbReference type="PANTHER" id="PTHR23417">
    <property type="entry name" value="3-DEOXY-D-MANNO-OCTULOSONIC-ACID TRANSFERASE/TRNA GUANINE-N 7 - -METHYLTRANSFERASE"/>
    <property type="match status" value="1"/>
</dbReference>
<dbReference type="PANTHER" id="PTHR23417:SF21">
    <property type="entry name" value="TRNA (GUANINE-N(7)-)-METHYLTRANSFERASE"/>
    <property type="match status" value="1"/>
</dbReference>
<dbReference type="Pfam" id="PF02390">
    <property type="entry name" value="Methyltransf_4"/>
    <property type="match status" value="1"/>
</dbReference>
<dbReference type="SUPFAM" id="SSF53335">
    <property type="entry name" value="S-adenosyl-L-methionine-dependent methyltransferases"/>
    <property type="match status" value="1"/>
</dbReference>
<dbReference type="PROSITE" id="PS51625">
    <property type="entry name" value="SAM_MT_TRMB"/>
    <property type="match status" value="1"/>
</dbReference>
<name>TRMB_PROMS</name>
<feature type="chain" id="PRO_0000288198" description="tRNA (guanine-N(7)-)-methyltransferase">
    <location>
        <begin position="1"/>
        <end position="209"/>
    </location>
</feature>
<feature type="active site" evidence="1">
    <location>
        <position position="113"/>
    </location>
</feature>
<feature type="binding site" evidence="2">
    <location>
        <position position="35"/>
    </location>
    <ligand>
        <name>S-adenosyl-L-methionine</name>
        <dbReference type="ChEBI" id="CHEBI:59789"/>
    </ligand>
</feature>
<feature type="binding site" evidence="2">
    <location>
        <position position="60"/>
    </location>
    <ligand>
        <name>S-adenosyl-L-methionine</name>
        <dbReference type="ChEBI" id="CHEBI:59789"/>
    </ligand>
</feature>
<feature type="binding site" evidence="2">
    <location>
        <position position="87"/>
    </location>
    <ligand>
        <name>S-adenosyl-L-methionine</name>
        <dbReference type="ChEBI" id="CHEBI:59789"/>
    </ligand>
</feature>
<feature type="binding site" evidence="2">
    <location>
        <position position="113"/>
    </location>
    <ligand>
        <name>S-adenosyl-L-methionine</name>
        <dbReference type="ChEBI" id="CHEBI:59789"/>
    </ligand>
</feature>
<feature type="binding site" evidence="2">
    <location>
        <position position="117"/>
    </location>
    <ligand>
        <name>substrate</name>
    </ligand>
</feature>
<feature type="binding site" evidence="2">
    <location>
        <position position="149"/>
    </location>
    <ligand>
        <name>substrate</name>
    </ligand>
</feature>
<comment type="function">
    <text evidence="2">Catalyzes the formation of N(7)-methylguanine at position 46 (m7G46) in tRNA.</text>
</comment>
<comment type="catalytic activity">
    <reaction evidence="2">
        <text>guanosine(46) in tRNA + S-adenosyl-L-methionine = N(7)-methylguanosine(46) in tRNA + S-adenosyl-L-homocysteine</text>
        <dbReference type="Rhea" id="RHEA:42708"/>
        <dbReference type="Rhea" id="RHEA-COMP:10188"/>
        <dbReference type="Rhea" id="RHEA-COMP:10189"/>
        <dbReference type="ChEBI" id="CHEBI:57856"/>
        <dbReference type="ChEBI" id="CHEBI:59789"/>
        <dbReference type="ChEBI" id="CHEBI:74269"/>
        <dbReference type="ChEBI" id="CHEBI:74480"/>
        <dbReference type="EC" id="2.1.1.33"/>
    </reaction>
</comment>
<comment type="pathway">
    <text evidence="2">tRNA modification; N(7)-methylguanine-tRNA biosynthesis.</text>
</comment>
<comment type="similarity">
    <text evidence="2">Belongs to the class I-like SAM-binding methyltransferase superfamily. TrmB family.</text>
</comment>
<evidence type="ECO:0000250" key="1"/>
<evidence type="ECO:0000255" key="2">
    <source>
        <dbReference type="HAMAP-Rule" id="MF_01057"/>
    </source>
</evidence>
<keyword id="KW-0489">Methyltransferase</keyword>
<keyword id="KW-0949">S-adenosyl-L-methionine</keyword>
<keyword id="KW-0808">Transferase</keyword>
<keyword id="KW-0819">tRNA processing</keyword>